<organism>
    <name type="scientific">Oryza sativa subsp. japonica</name>
    <name type="common">Rice</name>
    <dbReference type="NCBI Taxonomy" id="39947"/>
    <lineage>
        <taxon>Eukaryota</taxon>
        <taxon>Viridiplantae</taxon>
        <taxon>Streptophyta</taxon>
        <taxon>Embryophyta</taxon>
        <taxon>Tracheophyta</taxon>
        <taxon>Spermatophyta</taxon>
        <taxon>Magnoliopsida</taxon>
        <taxon>Liliopsida</taxon>
        <taxon>Poales</taxon>
        <taxon>Poaceae</taxon>
        <taxon>BOP clade</taxon>
        <taxon>Oryzoideae</taxon>
        <taxon>Oryzeae</taxon>
        <taxon>Oryzinae</taxon>
        <taxon>Oryza</taxon>
        <taxon>Oryza sativa</taxon>
    </lineage>
</organism>
<proteinExistence type="evidence at transcript level"/>
<accession>Q8RZL1</accession>
<accession>Q0JIB3</accession>
<accession>Q5N772</accession>
<feature type="signal peptide" evidence="5">
    <location>
        <begin position="1"/>
        <end position="22"/>
    </location>
</feature>
<feature type="chain" id="PRO_0000390322" description="Beta-glucosidase 3">
    <location>
        <begin position="23"/>
        <end position="505"/>
    </location>
</feature>
<feature type="active site" description="Proton donor" evidence="3">
    <location>
        <position position="189"/>
    </location>
</feature>
<feature type="active site" description="Nucleophile" evidence="3">
    <location>
        <position position="405"/>
    </location>
</feature>
<feature type="binding site" evidence="3">
    <location>
        <position position="43"/>
    </location>
    <ligand>
        <name>a beta-D-glucoside</name>
        <dbReference type="ChEBI" id="CHEBI:22798"/>
    </ligand>
</feature>
<feature type="binding site" evidence="3">
    <location>
        <position position="143"/>
    </location>
    <ligand>
        <name>a beta-D-glucoside</name>
        <dbReference type="ChEBI" id="CHEBI:22798"/>
    </ligand>
</feature>
<feature type="binding site" evidence="3">
    <location>
        <position position="333"/>
    </location>
    <ligand>
        <name>a beta-D-glucoside</name>
        <dbReference type="ChEBI" id="CHEBI:22798"/>
    </ligand>
</feature>
<feature type="binding site" evidence="4">
    <location>
        <position position="405"/>
    </location>
    <ligand>
        <name>a beta-D-glucoside</name>
        <dbReference type="ChEBI" id="CHEBI:22798"/>
    </ligand>
</feature>
<feature type="binding site" evidence="3">
    <location>
        <position position="450"/>
    </location>
    <ligand>
        <name>a beta-D-glucoside</name>
        <dbReference type="ChEBI" id="CHEBI:22798"/>
    </ligand>
</feature>
<feature type="binding site" evidence="1">
    <location>
        <position position="466"/>
    </location>
    <ligand>
        <name>a beta-D-glucoside</name>
        <dbReference type="ChEBI" id="CHEBI:22798"/>
    </ligand>
</feature>
<feature type="glycosylation site" description="N-linked (GlcNAc...) asparagine" evidence="6">
    <location>
        <position position="221"/>
    </location>
</feature>
<feature type="glycosylation site" description="N-linked (GlcNAc...) asparagine" evidence="6">
    <location>
        <position position="415"/>
    </location>
</feature>
<feature type="glycosylation site" description="N-linked (GlcNAc...) asparagine" evidence="6">
    <location>
        <position position="436"/>
    </location>
</feature>
<feature type="disulfide bond" evidence="3">
    <location>
        <begin position="208"/>
        <end position="217"/>
    </location>
</feature>
<dbReference type="EC" id="3.2.1.21" evidence="2"/>
<dbReference type="EMBL" id="AP003570">
    <property type="protein sequence ID" value="BAB90397.1"/>
    <property type="status" value="ALT_SEQ"/>
    <property type="molecule type" value="Genomic_DNA"/>
</dbReference>
<dbReference type="EMBL" id="AP004331">
    <property type="protein sequence ID" value="BAD82684.1"/>
    <property type="status" value="ALT_SEQ"/>
    <property type="molecule type" value="Genomic_DNA"/>
</dbReference>
<dbReference type="EMBL" id="AP008207">
    <property type="protein sequence ID" value="BAF06515.2"/>
    <property type="status" value="ALT_SEQ"/>
    <property type="molecule type" value="Genomic_DNA"/>
</dbReference>
<dbReference type="EMBL" id="AP014957">
    <property type="status" value="NOT_ANNOTATED_CDS"/>
    <property type="molecule type" value="Genomic_DNA"/>
</dbReference>
<dbReference type="SMR" id="Q8RZL1"/>
<dbReference type="FunCoup" id="Q8RZL1">
    <property type="interactions" value="56"/>
</dbReference>
<dbReference type="STRING" id="39947.Q8RZL1"/>
<dbReference type="CAZy" id="GH1">
    <property type="family name" value="Glycoside Hydrolase Family 1"/>
</dbReference>
<dbReference type="GlyCosmos" id="Q8RZL1">
    <property type="glycosylation" value="3 sites, No reported glycans"/>
</dbReference>
<dbReference type="PaxDb" id="39947-Q8RZL1"/>
<dbReference type="KEGG" id="dosa:Os01g0813800"/>
<dbReference type="eggNOG" id="KOG0626">
    <property type="taxonomic scope" value="Eukaryota"/>
</dbReference>
<dbReference type="InParanoid" id="Q8RZL1"/>
<dbReference type="Proteomes" id="UP000000763">
    <property type="component" value="Chromosome 1"/>
</dbReference>
<dbReference type="Proteomes" id="UP000059680">
    <property type="component" value="Chromosome 1"/>
</dbReference>
<dbReference type="GO" id="GO:0033907">
    <property type="term" value="F:beta-D-fucosidase activity"/>
    <property type="evidence" value="ECO:0007669"/>
    <property type="project" value="UniProtKB-ARBA"/>
</dbReference>
<dbReference type="GO" id="GO:0004565">
    <property type="term" value="F:beta-galactosidase activity"/>
    <property type="evidence" value="ECO:0007669"/>
    <property type="project" value="UniProtKB-ARBA"/>
</dbReference>
<dbReference type="GO" id="GO:0008422">
    <property type="term" value="F:beta-glucosidase activity"/>
    <property type="evidence" value="ECO:0000318"/>
    <property type="project" value="GO_Central"/>
</dbReference>
<dbReference type="GO" id="GO:0005975">
    <property type="term" value="P:carbohydrate metabolic process"/>
    <property type="evidence" value="ECO:0007669"/>
    <property type="project" value="InterPro"/>
</dbReference>
<dbReference type="FunFam" id="3.20.20.80:FF:000069">
    <property type="entry name" value="Beta-glucosidase 1"/>
    <property type="match status" value="1"/>
</dbReference>
<dbReference type="Gene3D" id="3.20.20.80">
    <property type="entry name" value="Glycosidases"/>
    <property type="match status" value="1"/>
</dbReference>
<dbReference type="InterPro" id="IPR001360">
    <property type="entry name" value="Glyco_hydro_1"/>
</dbReference>
<dbReference type="InterPro" id="IPR033132">
    <property type="entry name" value="Glyco_hydro_1_N_CS"/>
</dbReference>
<dbReference type="InterPro" id="IPR017853">
    <property type="entry name" value="Glycoside_hydrolase_SF"/>
</dbReference>
<dbReference type="PANTHER" id="PTHR10353:SF335">
    <property type="entry name" value="BETA-GLUCOSIDASE 2"/>
    <property type="match status" value="1"/>
</dbReference>
<dbReference type="PANTHER" id="PTHR10353">
    <property type="entry name" value="GLYCOSYL HYDROLASE"/>
    <property type="match status" value="1"/>
</dbReference>
<dbReference type="Pfam" id="PF00232">
    <property type="entry name" value="Glyco_hydro_1"/>
    <property type="match status" value="1"/>
</dbReference>
<dbReference type="PRINTS" id="PR00131">
    <property type="entry name" value="GLHYDRLASE1"/>
</dbReference>
<dbReference type="SUPFAM" id="SSF51445">
    <property type="entry name" value="(Trans)glycosidases"/>
    <property type="match status" value="1"/>
</dbReference>
<dbReference type="PROSITE" id="PS00653">
    <property type="entry name" value="GLYCOSYL_HYDROL_F1_2"/>
    <property type="match status" value="1"/>
</dbReference>
<evidence type="ECO:0000250" key="1">
    <source>
        <dbReference type="UniProtKB" id="P49235"/>
    </source>
</evidence>
<evidence type="ECO:0000250" key="2">
    <source>
        <dbReference type="UniProtKB" id="Q75I94"/>
    </source>
</evidence>
<evidence type="ECO:0000250" key="3">
    <source>
        <dbReference type="UniProtKB" id="Q7XSK0"/>
    </source>
</evidence>
<evidence type="ECO:0000250" key="4">
    <source>
        <dbReference type="UniProtKB" id="Q9SPP9"/>
    </source>
</evidence>
<evidence type="ECO:0000255" key="5"/>
<evidence type="ECO:0000255" key="6">
    <source>
        <dbReference type="PROSITE-ProRule" id="PRU00498"/>
    </source>
</evidence>
<evidence type="ECO:0000305" key="7"/>
<name>BGL03_ORYSJ</name>
<comment type="catalytic activity">
    <reaction evidence="2">
        <text>Hydrolysis of terminal, non-reducing beta-D-glucosyl residues with release of beta-D-glucose.</text>
        <dbReference type="EC" id="3.2.1.21"/>
    </reaction>
</comment>
<comment type="similarity">
    <text evidence="7">Belongs to the glycosyl hydrolase 1 family.</text>
</comment>
<comment type="sequence caution" evidence="7">
    <conflict type="erroneous gene model prediction">
        <sequence resource="EMBL-CDS" id="BAB90397"/>
    </conflict>
</comment>
<comment type="sequence caution" evidence="7">
    <conflict type="erroneous gene model prediction">
        <sequence resource="EMBL-CDS" id="BAD82684"/>
    </conflict>
</comment>
<comment type="sequence caution" evidence="7">
    <conflict type="erroneous gene model prediction">
        <sequence resource="EMBL-CDS" id="BAF06515"/>
    </conflict>
</comment>
<keyword id="KW-1015">Disulfide bond</keyword>
<keyword id="KW-0325">Glycoprotein</keyword>
<keyword id="KW-0326">Glycosidase</keyword>
<keyword id="KW-0378">Hydrolase</keyword>
<keyword id="KW-1185">Reference proteome</keyword>
<keyword id="KW-0732">Signal</keyword>
<sequence>MAAAAAFFCALLFISVQHGVLGGYTRNDFPADFVFGAATSAYQYEGAAAEDGRGASIWDTFTHAGKMKDKSTGDVASDGYHKYKGDVKLMTETGLEAYRFSISWSRLIPSGRGAVNQQGLKYYNNIIDELTKRGIQVHVMLYHLDLPQALEDEYAGWLSPRIVEDFTAYADVCFREFGDRVSHWTILAEPNVAALGGYDTGEFAPGRCSDPFGVTKCTVGNSSVEPYVAAHNMILTHAAVVRLYREKYQTLQKGIVGINVLSLWSYPLTDSTADLQAAQRYKDFTYGWILHPLVFGDYPQVMKKAIGSRLPSFSKVQTELVKGTLDFIGVNHYFSLYVSDLPLAKGVRDFIADRSVSCRGLLQGVRFIAQTMQAPTRSMGDPHGLQLMLQHLKESYGDLPIYVQENGKYRKASSNDSLDDTDRVDYIKGYIEGVLNATRNGVNARGYFAWFFVDMFELLSGYQTRYGLYRVDFDDAALPRRAKRSARWYRDFLKSKRQPLQIAQQ</sequence>
<protein>
    <recommendedName>
        <fullName>Beta-glucosidase 3</fullName>
        <shortName>Os1bglu3</shortName>
        <ecNumber evidence="2">3.2.1.21</ecNumber>
    </recommendedName>
</protein>
<reference key="1">
    <citation type="journal article" date="2002" name="Nature">
        <title>The genome sequence and structure of rice chromosome 1.</title>
        <authorList>
            <person name="Sasaki T."/>
            <person name="Matsumoto T."/>
            <person name="Yamamoto K."/>
            <person name="Sakata K."/>
            <person name="Baba T."/>
            <person name="Katayose Y."/>
            <person name="Wu J."/>
            <person name="Niimura Y."/>
            <person name="Cheng Z."/>
            <person name="Nagamura Y."/>
            <person name="Antonio B.A."/>
            <person name="Kanamori H."/>
            <person name="Hosokawa S."/>
            <person name="Masukawa M."/>
            <person name="Arikawa K."/>
            <person name="Chiden Y."/>
            <person name="Hayashi M."/>
            <person name="Okamoto M."/>
            <person name="Ando T."/>
            <person name="Aoki H."/>
            <person name="Arita K."/>
            <person name="Hamada M."/>
            <person name="Harada C."/>
            <person name="Hijishita S."/>
            <person name="Honda M."/>
            <person name="Ichikawa Y."/>
            <person name="Idonuma A."/>
            <person name="Iijima M."/>
            <person name="Ikeda M."/>
            <person name="Ikeno M."/>
            <person name="Ito S."/>
            <person name="Ito T."/>
            <person name="Ito Y."/>
            <person name="Ito Y."/>
            <person name="Iwabuchi A."/>
            <person name="Kamiya K."/>
            <person name="Karasawa W."/>
            <person name="Katagiri S."/>
            <person name="Kikuta A."/>
            <person name="Kobayashi N."/>
            <person name="Kono I."/>
            <person name="Machita K."/>
            <person name="Maehara T."/>
            <person name="Mizuno H."/>
            <person name="Mizubayashi T."/>
            <person name="Mukai Y."/>
            <person name="Nagasaki H."/>
            <person name="Nakashima M."/>
            <person name="Nakama Y."/>
            <person name="Nakamichi Y."/>
            <person name="Nakamura M."/>
            <person name="Namiki N."/>
            <person name="Negishi M."/>
            <person name="Ohta I."/>
            <person name="Ono N."/>
            <person name="Saji S."/>
            <person name="Sakai K."/>
            <person name="Shibata M."/>
            <person name="Shimokawa T."/>
            <person name="Shomura A."/>
            <person name="Song J."/>
            <person name="Takazaki Y."/>
            <person name="Terasawa K."/>
            <person name="Tsuji K."/>
            <person name="Waki K."/>
            <person name="Yamagata H."/>
            <person name="Yamane H."/>
            <person name="Yoshiki S."/>
            <person name="Yoshihara R."/>
            <person name="Yukawa K."/>
            <person name="Zhong H."/>
            <person name="Iwama H."/>
            <person name="Endo T."/>
            <person name="Ito H."/>
            <person name="Hahn J.H."/>
            <person name="Kim H.-I."/>
            <person name="Eun M.-Y."/>
            <person name="Yano M."/>
            <person name="Jiang J."/>
            <person name="Gojobori T."/>
        </authorList>
    </citation>
    <scope>NUCLEOTIDE SEQUENCE [LARGE SCALE GENOMIC DNA]</scope>
    <source>
        <strain>cv. Nipponbare</strain>
    </source>
</reference>
<reference key="2">
    <citation type="journal article" date="2005" name="Nature">
        <title>The map-based sequence of the rice genome.</title>
        <authorList>
            <consortium name="International rice genome sequencing project (IRGSP)"/>
        </authorList>
    </citation>
    <scope>NUCLEOTIDE SEQUENCE [LARGE SCALE GENOMIC DNA]</scope>
    <source>
        <strain>cv. Nipponbare</strain>
    </source>
</reference>
<reference key="3">
    <citation type="journal article" date="2008" name="Nucleic Acids Res.">
        <title>The rice annotation project database (RAP-DB): 2008 update.</title>
        <authorList>
            <consortium name="The rice annotation project (RAP)"/>
        </authorList>
    </citation>
    <scope>GENOME REANNOTATION</scope>
    <source>
        <strain>cv. Nipponbare</strain>
    </source>
</reference>
<reference key="4">
    <citation type="journal article" date="2013" name="Rice">
        <title>Improvement of the Oryza sativa Nipponbare reference genome using next generation sequence and optical map data.</title>
        <authorList>
            <person name="Kawahara Y."/>
            <person name="de la Bastide M."/>
            <person name="Hamilton J.P."/>
            <person name="Kanamori H."/>
            <person name="McCombie W.R."/>
            <person name="Ouyang S."/>
            <person name="Schwartz D.C."/>
            <person name="Tanaka T."/>
            <person name="Wu J."/>
            <person name="Zhou S."/>
            <person name="Childs K.L."/>
            <person name="Davidson R.M."/>
            <person name="Lin H."/>
            <person name="Quesada-Ocampo L."/>
            <person name="Vaillancourt B."/>
            <person name="Sakai H."/>
            <person name="Lee S.S."/>
            <person name="Kim J."/>
            <person name="Numa H."/>
            <person name="Itoh T."/>
            <person name="Buell C.R."/>
            <person name="Matsumoto T."/>
        </authorList>
    </citation>
    <scope>GENOME REANNOTATION</scope>
    <source>
        <strain>cv. Nipponbare</strain>
    </source>
</reference>
<reference key="5">
    <citation type="journal article" date="2006" name="BMC Plant Biol.">
        <title>Analysis of rice glycosyl hydrolase family 1 and expression of Os4bglu12 beta-glucosidase.</title>
        <authorList>
            <person name="Opassiri R."/>
            <person name="Pomthong B."/>
            <person name="Onkoksoong T."/>
            <person name="Akiyama T."/>
            <person name="Esen A."/>
            <person name="Ketudat Cairns J.R."/>
        </authorList>
    </citation>
    <scope>GENE FAMILY</scope>
    <scope>NOMENCLATURE</scope>
</reference>
<gene>
    <name type="primary">BGLU3</name>
    <name type="ordered locus">Os01g0813800</name>
    <name type="ordered locus">LOC_Os01g59840</name>
    <name type="ORF">OSJNBa0085D07.14-1</name>
    <name type="ORF">P0432B10.18</name>
</gene>